<sequence>MTQLAIGKPTPLGAHYDGQGVNFTLFSAHAERVELCVFDANGQEHRYDLPGHSGDIWHGYLPDARPGLRYGYRVHGPWQPAEGHRFNPAKLLIDPCARQIDGEFKDNPLLHAGHNEPDYRDNAAIAPKCVVVVDHYDWEDDAPPRTPWGSTIIYEAHVKGLTYLHPEIPVEIRGTYKALGHPVMINYLKQLGITALELLPVAQFASEPRLQRMGLSNYWGYNPVAMFALHPAYACSPETALDEFRDAIKALHKAGIEVILDIVLNHSAELDLDGPLFSLRGIDNRSYYWIREDGDYHNWTGCGNTLNLSHPAVVDYASACLRYWVETCHVDGFRFDLAAVMGRTPEFRQDAPLFTAIQNCPVLSQVKLIAEPWDIAPGGYQVGNFPPLFAEWNDHFRDAARRFWLHYDLPLGAFAGRFAASSDVFKRNDRLPSAAINLVTAHDGFTLRDCVCFNHKHNEANGEENRDGTNNNYSNNHGKEGLGGTLDLVERRRDSIHALLTTLLLSQGTPMLLAGDEHGHSQHGNNNAYCQDNQLTWLDWSQASSGLTAFTAALIHLRKRIPALMENRWWEEGDGNVRWLNRYAQPLSTDEWQNGPKQLQILLSDRFLIAINATLEVTEIVLPAGEWHAIPPFAGEDNPVITAVWQGPAHGLCVFQR</sequence>
<reference key="1">
    <citation type="journal article" date="2006" name="Mol. Microbiol.">
        <title>Role of pathogenicity island-associated integrases in the genome plasticity of uropathogenic Escherichia coli strain 536.</title>
        <authorList>
            <person name="Hochhut B."/>
            <person name="Wilde C."/>
            <person name="Balling G."/>
            <person name="Middendorf B."/>
            <person name="Dobrindt U."/>
            <person name="Brzuszkiewicz E."/>
            <person name="Gottschalk G."/>
            <person name="Carniel E."/>
            <person name="Hacker J."/>
        </authorList>
    </citation>
    <scope>NUCLEOTIDE SEQUENCE [LARGE SCALE GENOMIC DNA]</scope>
    <source>
        <strain>536 / UPEC</strain>
    </source>
</reference>
<comment type="function">
    <text evidence="1">Removes maltotriose and maltotetraose chains that are attached by 1,6-alpha-linkage to the limit dextrin main chain, generating a debranched limit dextrin.</text>
</comment>
<comment type="catalytic activity">
    <reaction evidence="1">
        <text>Hydrolysis of (1-&gt;6)-alpha-D-glucosidic linkages to branches with degrees of polymerization of three or four glucose residues in limit dextrin.</text>
        <dbReference type="EC" id="3.2.1.196"/>
    </reaction>
</comment>
<comment type="pathway">
    <text evidence="1">Glycan degradation; glycogen degradation.</text>
</comment>
<comment type="similarity">
    <text evidence="1">Belongs to the glycosyl hydrolase 13 family.</text>
</comment>
<dbReference type="EC" id="3.2.1.196" evidence="1"/>
<dbReference type="EMBL" id="CP000247">
    <property type="protein sequence ID" value="ABG71501.1"/>
    <property type="molecule type" value="Genomic_DNA"/>
</dbReference>
<dbReference type="RefSeq" id="WP_000192568.1">
    <property type="nucleotide sequence ID" value="NC_008253.1"/>
</dbReference>
<dbReference type="SMR" id="Q0TC28"/>
<dbReference type="CAZy" id="CBM48">
    <property type="family name" value="Carbohydrate-Binding Module Family 48"/>
</dbReference>
<dbReference type="CAZy" id="GH13">
    <property type="family name" value="Glycoside Hydrolase Family 13"/>
</dbReference>
<dbReference type="KEGG" id="ecp:ECP_3525"/>
<dbReference type="HOGENOM" id="CLU_011725_1_1_6"/>
<dbReference type="UniPathway" id="UPA00165"/>
<dbReference type="Proteomes" id="UP000009182">
    <property type="component" value="Chromosome"/>
</dbReference>
<dbReference type="GO" id="GO:0004133">
    <property type="term" value="F:glycogen debranching enzyme activity"/>
    <property type="evidence" value="ECO:0007669"/>
    <property type="project" value="UniProtKB-UniRule"/>
</dbReference>
<dbReference type="GO" id="GO:0004553">
    <property type="term" value="F:hydrolase activity, hydrolyzing O-glycosyl compounds"/>
    <property type="evidence" value="ECO:0007669"/>
    <property type="project" value="InterPro"/>
</dbReference>
<dbReference type="GO" id="GO:0005980">
    <property type="term" value="P:glycogen catabolic process"/>
    <property type="evidence" value="ECO:0007669"/>
    <property type="project" value="UniProtKB-UniRule"/>
</dbReference>
<dbReference type="CDD" id="cd11326">
    <property type="entry name" value="AmyAc_Glg_debranch"/>
    <property type="match status" value="1"/>
</dbReference>
<dbReference type="CDD" id="cd02856">
    <property type="entry name" value="E_set_GDE_Isoamylase_N"/>
    <property type="match status" value="1"/>
</dbReference>
<dbReference type="FunFam" id="2.60.40.10:FF:000468">
    <property type="entry name" value="Glycogen debranching enzyme"/>
    <property type="match status" value="1"/>
</dbReference>
<dbReference type="FunFam" id="3.20.20.80:FF:000031">
    <property type="entry name" value="Glycogen debranching enzyme"/>
    <property type="match status" value="1"/>
</dbReference>
<dbReference type="Gene3D" id="3.20.20.80">
    <property type="entry name" value="Glycosidases"/>
    <property type="match status" value="1"/>
</dbReference>
<dbReference type="Gene3D" id="2.60.40.1180">
    <property type="entry name" value="Golgi alpha-mannosidase II"/>
    <property type="match status" value="1"/>
</dbReference>
<dbReference type="Gene3D" id="2.60.40.10">
    <property type="entry name" value="Immunoglobulins"/>
    <property type="match status" value="1"/>
</dbReference>
<dbReference type="HAMAP" id="MF_01248">
    <property type="entry name" value="GlgX"/>
    <property type="match status" value="1"/>
</dbReference>
<dbReference type="InterPro" id="IPR040784">
    <property type="entry name" value="GlgX_C"/>
</dbReference>
<dbReference type="InterPro" id="IPR044505">
    <property type="entry name" value="GlgX_Isoamylase_N_E_set"/>
</dbReference>
<dbReference type="InterPro" id="IPR006047">
    <property type="entry name" value="Glyco_hydro_13_cat_dom"/>
</dbReference>
<dbReference type="InterPro" id="IPR004193">
    <property type="entry name" value="Glyco_hydro_13_N"/>
</dbReference>
<dbReference type="InterPro" id="IPR013780">
    <property type="entry name" value="Glyco_hydro_b"/>
</dbReference>
<dbReference type="InterPro" id="IPR022844">
    <property type="entry name" value="Glycogen_debranch_bac"/>
</dbReference>
<dbReference type="InterPro" id="IPR011837">
    <property type="entry name" value="Glycogen_debranch_GlgX"/>
</dbReference>
<dbReference type="InterPro" id="IPR017853">
    <property type="entry name" value="Glycoside_hydrolase_SF"/>
</dbReference>
<dbReference type="InterPro" id="IPR013783">
    <property type="entry name" value="Ig-like_fold"/>
</dbReference>
<dbReference type="InterPro" id="IPR014756">
    <property type="entry name" value="Ig_E-set"/>
</dbReference>
<dbReference type="NCBIfam" id="TIGR02100">
    <property type="entry name" value="glgX_debranch"/>
    <property type="match status" value="1"/>
</dbReference>
<dbReference type="NCBIfam" id="NF002983">
    <property type="entry name" value="PRK03705.1"/>
    <property type="match status" value="1"/>
</dbReference>
<dbReference type="PANTHER" id="PTHR43002">
    <property type="entry name" value="GLYCOGEN DEBRANCHING ENZYME"/>
    <property type="match status" value="1"/>
</dbReference>
<dbReference type="Pfam" id="PF00128">
    <property type="entry name" value="Alpha-amylase"/>
    <property type="match status" value="1"/>
</dbReference>
<dbReference type="Pfam" id="PF02922">
    <property type="entry name" value="CBM_48"/>
    <property type="match status" value="1"/>
</dbReference>
<dbReference type="Pfam" id="PF18390">
    <property type="entry name" value="GlgX_C"/>
    <property type="match status" value="1"/>
</dbReference>
<dbReference type="SMART" id="SM00642">
    <property type="entry name" value="Aamy"/>
    <property type="match status" value="1"/>
</dbReference>
<dbReference type="SUPFAM" id="SSF51445">
    <property type="entry name" value="(Trans)glycosidases"/>
    <property type="match status" value="1"/>
</dbReference>
<dbReference type="SUPFAM" id="SSF81296">
    <property type="entry name" value="E set domains"/>
    <property type="match status" value="1"/>
</dbReference>
<proteinExistence type="inferred from homology"/>
<accession>Q0TC28</accession>
<feature type="chain" id="PRO_1000067101" description="Glycogen debranching enzyme">
    <location>
        <begin position="1"/>
        <end position="657"/>
    </location>
</feature>
<feature type="region of interest" description="Disordered" evidence="2">
    <location>
        <begin position="460"/>
        <end position="479"/>
    </location>
</feature>
<feature type="active site" description="Nucleophile" evidence="1">
    <location>
        <position position="336"/>
    </location>
</feature>
<feature type="active site" description="Proton donor" evidence="1">
    <location>
        <position position="371"/>
    </location>
</feature>
<feature type="site" description="Transition state stabilizer" evidence="1">
    <location>
        <position position="443"/>
    </location>
</feature>
<gene>
    <name evidence="1" type="primary">glgX</name>
    <name type="ordered locus">ECP_3525</name>
</gene>
<protein>
    <recommendedName>
        <fullName evidence="1">Glycogen debranching enzyme</fullName>
        <ecNumber evidence="1">3.2.1.196</ecNumber>
    </recommendedName>
    <alternativeName>
        <fullName evidence="1">Limit dextrin alpha-1,6-maltotetraose-hydrolase</fullName>
    </alternativeName>
</protein>
<organism>
    <name type="scientific">Escherichia coli O6:K15:H31 (strain 536 / UPEC)</name>
    <dbReference type="NCBI Taxonomy" id="362663"/>
    <lineage>
        <taxon>Bacteria</taxon>
        <taxon>Pseudomonadati</taxon>
        <taxon>Pseudomonadota</taxon>
        <taxon>Gammaproteobacteria</taxon>
        <taxon>Enterobacterales</taxon>
        <taxon>Enterobacteriaceae</taxon>
        <taxon>Escherichia</taxon>
    </lineage>
</organism>
<evidence type="ECO:0000255" key="1">
    <source>
        <dbReference type="HAMAP-Rule" id="MF_01248"/>
    </source>
</evidence>
<evidence type="ECO:0000256" key="2">
    <source>
        <dbReference type="SAM" id="MobiDB-lite"/>
    </source>
</evidence>
<name>GLGX_ECOL5</name>
<keyword id="KW-0119">Carbohydrate metabolism</keyword>
<keyword id="KW-0321">Glycogen metabolism</keyword>
<keyword id="KW-0326">Glycosidase</keyword>
<keyword id="KW-0378">Hydrolase</keyword>